<name>DTD_BIFLS</name>
<accession>B7GQ87</accession>
<accession>E8MR49</accession>
<organism>
    <name type="scientific">Bifidobacterium longum subsp. infantis (strain ATCC 15697 / DSM 20088 / JCM 1222 / NCTC 11817 / S12)</name>
    <dbReference type="NCBI Taxonomy" id="391904"/>
    <lineage>
        <taxon>Bacteria</taxon>
        <taxon>Bacillati</taxon>
        <taxon>Actinomycetota</taxon>
        <taxon>Actinomycetes</taxon>
        <taxon>Bifidobacteriales</taxon>
        <taxon>Bifidobacteriaceae</taxon>
        <taxon>Bifidobacterium</taxon>
    </lineage>
</organism>
<dbReference type="EC" id="3.1.1.96" evidence="1"/>
<dbReference type="EMBL" id="CP001095">
    <property type="protein sequence ID" value="ACJ51967.1"/>
    <property type="molecule type" value="Genomic_DNA"/>
</dbReference>
<dbReference type="EMBL" id="AP010889">
    <property type="protein sequence ID" value="BAJ68474.1"/>
    <property type="molecule type" value="Genomic_DNA"/>
</dbReference>
<dbReference type="RefSeq" id="WP_008783436.1">
    <property type="nucleotide sequence ID" value="NZ_JDTT01000021.1"/>
</dbReference>
<dbReference type="SMR" id="B7GQ87"/>
<dbReference type="KEGG" id="bln:Blon_0867"/>
<dbReference type="KEGG" id="blon:BLIJ_0883"/>
<dbReference type="PATRIC" id="fig|391904.8.peg.891"/>
<dbReference type="HOGENOM" id="CLU_076901_1_0_11"/>
<dbReference type="Proteomes" id="UP000001360">
    <property type="component" value="Chromosome"/>
</dbReference>
<dbReference type="GO" id="GO:0005737">
    <property type="term" value="C:cytoplasm"/>
    <property type="evidence" value="ECO:0007669"/>
    <property type="project" value="UniProtKB-SubCell"/>
</dbReference>
<dbReference type="GO" id="GO:0051500">
    <property type="term" value="F:D-tyrosyl-tRNA(Tyr) deacylase activity"/>
    <property type="evidence" value="ECO:0007669"/>
    <property type="project" value="TreeGrafter"/>
</dbReference>
<dbReference type="GO" id="GO:0106026">
    <property type="term" value="F:Gly-tRNA(Ala) deacylase activity"/>
    <property type="evidence" value="ECO:0007669"/>
    <property type="project" value="UniProtKB-UniRule"/>
</dbReference>
<dbReference type="GO" id="GO:0043908">
    <property type="term" value="F:Ser(Gly)-tRNA(Ala) hydrolase activity"/>
    <property type="evidence" value="ECO:0007669"/>
    <property type="project" value="UniProtKB-UniRule"/>
</dbReference>
<dbReference type="GO" id="GO:0000049">
    <property type="term" value="F:tRNA binding"/>
    <property type="evidence" value="ECO:0007669"/>
    <property type="project" value="UniProtKB-UniRule"/>
</dbReference>
<dbReference type="GO" id="GO:0019478">
    <property type="term" value="P:D-amino acid catabolic process"/>
    <property type="evidence" value="ECO:0007669"/>
    <property type="project" value="UniProtKB-UniRule"/>
</dbReference>
<dbReference type="FunFam" id="3.50.80.10:FF:000001">
    <property type="entry name" value="D-aminoacyl-tRNA deacylase"/>
    <property type="match status" value="1"/>
</dbReference>
<dbReference type="Gene3D" id="3.50.80.10">
    <property type="entry name" value="D-tyrosyl-tRNA(Tyr) deacylase"/>
    <property type="match status" value="1"/>
</dbReference>
<dbReference type="HAMAP" id="MF_00518">
    <property type="entry name" value="Deacylase_Dtd"/>
    <property type="match status" value="1"/>
</dbReference>
<dbReference type="InterPro" id="IPR003732">
    <property type="entry name" value="Daa-tRNA_deacyls_DTD"/>
</dbReference>
<dbReference type="InterPro" id="IPR023509">
    <property type="entry name" value="DTD-like_sf"/>
</dbReference>
<dbReference type="NCBIfam" id="TIGR00256">
    <property type="entry name" value="D-aminoacyl-tRNA deacylase"/>
    <property type="match status" value="1"/>
</dbReference>
<dbReference type="PANTHER" id="PTHR10472:SF5">
    <property type="entry name" value="D-AMINOACYL-TRNA DEACYLASE 1"/>
    <property type="match status" value="1"/>
</dbReference>
<dbReference type="PANTHER" id="PTHR10472">
    <property type="entry name" value="D-TYROSYL-TRNA TYR DEACYLASE"/>
    <property type="match status" value="1"/>
</dbReference>
<dbReference type="Pfam" id="PF02580">
    <property type="entry name" value="Tyr_Deacylase"/>
    <property type="match status" value="1"/>
</dbReference>
<dbReference type="SUPFAM" id="SSF69500">
    <property type="entry name" value="DTD-like"/>
    <property type="match status" value="1"/>
</dbReference>
<reference key="1">
    <citation type="journal article" date="2008" name="Proc. Natl. Acad. Sci. U.S.A.">
        <title>The genome sequence of Bifidobacterium longum subsp. infantis reveals adaptations for milk utilization within the infant microbiome.</title>
        <authorList>
            <person name="Sela D.A."/>
            <person name="Chapman J."/>
            <person name="Adeuya A."/>
            <person name="Kim J.H."/>
            <person name="Chen F."/>
            <person name="Whitehead T.R."/>
            <person name="Lapidus A."/>
            <person name="Rokhsar D.S."/>
            <person name="Lebrilla C.B."/>
            <person name="German J.B."/>
            <person name="Price N.P."/>
            <person name="Richardson P.M."/>
            <person name="Mills D.A."/>
        </authorList>
    </citation>
    <scope>NUCLEOTIDE SEQUENCE [LARGE SCALE GENOMIC DNA]</scope>
    <source>
        <strain>ATCC 15697 / DSM 20088 / JCM 1222 / NCTC 11817 / S12</strain>
    </source>
</reference>
<reference key="2">
    <citation type="journal article" date="2011" name="Nature">
        <title>Bifidobacteria can protect from enteropathogenic infection through production of acetate.</title>
        <authorList>
            <person name="Fukuda S."/>
            <person name="Toh H."/>
            <person name="Hase K."/>
            <person name="Oshima K."/>
            <person name="Nakanishi Y."/>
            <person name="Yoshimura K."/>
            <person name="Tobe T."/>
            <person name="Clarke J.M."/>
            <person name="Topping D.L."/>
            <person name="Suzuki T."/>
            <person name="Taylor T.D."/>
            <person name="Itoh K."/>
            <person name="Kikuchi J."/>
            <person name="Morita H."/>
            <person name="Hattori M."/>
            <person name="Ohno H."/>
        </authorList>
    </citation>
    <scope>NUCLEOTIDE SEQUENCE [LARGE SCALE GENOMIC DNA]</scope>
    <source>
        <strain>ATCC 15697 / DSM 20088 / JCM 1222 / NCTC 11817 / S12</strain>
    </source>
</reference>
<evidence type="ECO:0000255" key="1">
    <source>
        <dbReference type="HAMAP-Rule" id="MF_00518"/>
    </source>
</evidence>
<protein>
    <recommendedName>
        <fullName evidence="1">D-aminoacyl-tRNA deacylase</fullName>
        <shortName evidence="1">DTD</shortName>
        <ecNumber evidence="1">3.1.1.96</ecNumber>
    </recommendedName>
    <alternativeName>
        <fullName evidence="1">Gly-tRNA(Ala) deacylase</fullName>
    </alternativeName>
</protein>
<gene>
    <name evidence="1" type="primary">dtd</name>
    <name type="ordered locus">Blon_0867</name>
    <name type="ordered locus">BLIJ_0883</name>
</gene>
<feature type="chain" id="PRO_1000146185" description="D-aminoacyl-tRNA deacylase">
    <location>
        <begin position="1"/>
        <end position="162"/>
    </location>
</feature>
<feature type="short sequence motif" description="Gly-cisPro motif, important for rejection of L-amino acids" evidence="1">
    <location>
        <begin position="145"/>
        <end position="146"/>
    </location>
</feature>
<comment type="function">
    <text evidence="1">An aminoacyl-tRNA editing enzyme that deacylates mischarged D-aminoacyl-tRNAs. Also deacylates mischarged glycyl-tRNA(Ala), protecting cells against glycine mischarging by AlaRS. Acts via tRNA-based rather than protein-based catalysis; rejects L-amino acids rather than detecting D-amino acids in the active site. By recycling D-aminoacyl-tRNA to D-amino acids and free tRNA molecules, this enzyme counteracts the toxicity associated with the formation of D-aminoacyl-tRNA entities in vivo and helps enforce protein L-homochirality.</text>
</comment>
<comment type="catalytic activity">
    <reaction evidence="1">
        <text>glycyl-tRNA(Ala) + H2O = tRNA(Ala) + glycine + H(+)</text>
        <dbReference type="Rhea" id="RHEA:53744"/>
        <dbReference type="Rhea" id="RHEA-COMP:9657"/>
        <dbReference type="Rhea" id="RHEA-COMP:13640"/>
        <dbReference type="ChEBI" id="CHEBI:15377"/>
        <dbReference type="ChEBI" id="CHEBI:15378"/>
        <dbReference type="ChEBI" id="CHEBI:57305"/>
        <dbReference type="ChEBI" id="CHEBI:78442"/>
        <dbReference type="ChEBI" id="CHEBI:78522"/>
        <dbReference type="EC" id="3.1.1.96"/>
    </reaction>
</comment>
<comment type="catalytic activity">
    <reaction evidence="1">
        <text>a D-aminoacyl-tRNA + H2O = a tRNA + a D-alpha-amino acid + H(+)</text>
        <dbReference type="Rhea" id="RHEA:13953"/>
        <dbReference type="Rhea" id="RHEA-COMP:10123"/>
        <dbReference type="Rhea" id="RHEA-COMP:10124"/>
        <dbReference type="ChEBI" id="CHEBI:15377"/>
        <dbReference type="ChEBI" id="CHEBI:15378"/>
        <dbReference type="ChEBI" id="CHEBI:59871"/>
        <dbReference type="ChEBI" id="CHEBI:78442"/>
        <dbReference type="ChEBI" id="CHEBI:79333"/>
        <dbReference type="EC" id="3.1.1.96"/>
    </reaction>
</comment>
<comment type="subunit">
    <text evidence="1">Homodimer.</text>
</comment>
<comment type="subcellular location">
    <subcellularLocation>
        <location evidence="1">Cytoplasm</location>
    </subcellularLocation>
</comment>
<comment type="domain">
    <text evidence="1">A Gly-cisPro motif from one monomer fits into the active site of the other monomer to allow specific chiral rejection of L-amino acids.</text>
</comment>
<comment type="similarity">
    <text evidence="1">Belongs to the DTD family.</text>
</comment>
<sequence>MKVVLQRVSEASVDVVNELGTLDPTFEPQQIGPGFMILVGVTDEDGDKQIAWLAHKILNLRVFEDAQGKMNRSIQDIGGEILSISQFTLFADVHKGNRPSFIKAGKPEHADLMWIKFNEALRSGGVPVKEGRFGAHMRVGLVNDGPVTIVIDTEHDMPDGTR</sequence>
<proteinExistence type="inferred from homology"/>
<keyword id="KW-0963">Cytoplasm</keyword>
<keyword id="KW-0378">Hydrolase</keyword>
<keyword id="KW-0694">RNA-binding</keyword>
<keyword id="KW-0820">tRNA-binding</keyword>